<dbReference type="EC" id="2.4.99.28" evidence="1"/>
<dbReference type="EMBL" id="L47159">
    <property type="protein sequence ID" value="AAB37748.1"/>
    <property type="molecule type" value="Genomic_DNA"/>
</dbReference>
<dbReference type="EMBL" id="U82700">
    <property type="protein sequence ID" value="AAC44899.1"/>
    <property type="molecule type" value="Genomic_DNA"/>
</dbReference>
<dbReference type="RefSeq" id="WP_003695505.1">
    <property type="nucleotide sequence ID" value="NZ_WHPL01000002.1"/>
</dbReference>
<dbReference type="SMR" id="Q51005"/>
<dbReference type="CAZy" id="GT51">
    <property type="family name" value="Glycosyltransferase Family 51"/>
</dbReference>
<dbReference type="UniPathway" id="UPA00219"/>
<dbReference type="GO" id="GO:0009274">
    <property type="term" value="C:peptidoglycan-based cell wall"/>
    <property type="evidence" value="ECO:0007669"/>
    <property type="project" value="InterPro"/>
</dbReference>
<dbReference type="GO" id="GO:0005886">
    <property type="term" value="C:plasma membrane"/>
    <property type="evidence" value="ECO:0007669"/>
    <property type="project" value="UniProtKB-SubCell"/>
</dbReference>
<dbReference type="GO" id="GO:0016763">
    <property type="term" value="F:pentosyltransferase activity"/>
    <property type="evidence" value="ECO:0007669"/>
    <property type="project" value="InterPro"/>
</dbReference>
<dbReference type="GO" id="GO:0008955">
    <property type="term" value="F:peptidoglycan glycosyltransferase activity"/>
    <property type="evidence" value="ECO:0007669"/>
    <property type="project" value="UniProtKB-UniRule"/>
</dbReference>
<dbReference type="GO" id="GO:0071555">
    <property type="term" value="P:cell wall organization"/>
    <property type="evidence" value="ECO:0007669"/>
    <property type="project" value="UniProtKB-KW"/>
</dbReference>
<dbReference type="GO" id="GO:0009252">
    <property type="term" value="P:peptidoglycan biosynthetic process"/>
    <property type="evidence" value="ECO:0007669"/>
    <property type="project" value="UniProtKB-UniRule"/>
</dbReference>
<dbReference type="GO" id="GO:0008360">
    <property type="term" value="P:regulation of cell shape"/>
    <property type="evidence" value="ECO:0007669"/>
    <property type="project" value="UniProtKB-KW"/>
</dbReference>
<dbReference type="Gene3D" id="1.10.3810.10">
    <property type="entry name" value="Biosynthetic peptidoglycan transglycosylase-like"/>
    <property type="match status" value="1"/>
</dbReference>
<dbReference type="HAMAP" id="MF_00766">
    <property type="entry name" value="PGT_MtgA"/>
    <property type="match status" value="1"/>
</dbReference>
<dbReference type="InterPro" id="IPR001264">
    <property type="entry name" value="Glyco_trans_51"/>
</dbReference>
<dbReference type="InterPro" id="IPR023346">
    <property type="entry name" value="Lysozyme-like_dom_sf"/>
</dbReference>
<dbReference type="InterPro" id="IPR036950">
    <property type="entry name" value="PBP_transglycosylase"/>
</dbReference>
<dbReference type="InterPro" id="IPR011812">
    <property type="entry name" value="Pep_trsgly"/>
</dbReference>
<dbReference type="NCBIfam" id="TIGR02070">
    <property type="entry name" value="mono_pep_trsgly"/>
    <property type="match status" value="1"/>
</dbReference>
<dbReference type="PANTHER" id="PTHR30400:SF0">
    <property type="entry name" value="BIOSYNTHETIC PEPTIDOGLYCAN TRANSGLYCOSYLASE"/>
    <property type="match status" value="1"/>
</dbReference>
<dbReference type="PANTHER" id="PTHR30400">
    <property type="entry name" value="MONOFUNCTIONAL BIOSYNTHETIC PEPTIDOGLYCAN TRANSGLYCOSYLASE"/>
    <property type="match status" value="1"/>
</dbReference>
<dbReference type="Pfam" id="PF00912">
    <property type="entry name" value="Transgly"/>
    <property type="match status" value="1"/>
</dbReference>
<dbReference type="SUPFAM" id="SSF53955">
    <property type="entry name" value="Lysozyme-like"/>
    <property type="match status" value="1"/>
</dbReference>
<organism>
    <name type="scientific">Neisseria gonorrhoeae</name>
    <dbReference type="NCBI Taxonomy" id="485"/>
    <lineage>
        <taxon>Bacteria</taxon>
        <taxon>Pseudomonadati</taxon>
        <taxon>Pseudomonadota</taxon>
        <taxon>Betaproteobacteria</taxon>
        <taxon>Neisseriales</taxon>
        <taxon>Neisseriaceae</taxon>
        <taxon>Neisseria</taxon>
    </lineage>
</organism>
<gene>
    <name evidence="1" type="primary">mtgA</name>
</gene>
<keyword id="KW-0997">Cell inner membrane</keyword>
<keyword id="KW-1003">Cell membrane</keyword>
<keyword id="KW-0133">Cell shape</keyword>
<keyword id="KW-0961">Cell wall biogenesis/degradation</keyword>
<keyword id="KW-0328">Glycosyltransferase</keyword>
<keyword id="KW-0472">Membrane</keyword>
<keyword id="KW-0573">Peptidoglycan synthesis</keyword>
<keyword id="KW-0808">Transferase</keyword>
<keyword id="KW-0812">Transmembrane</keyword>
<keyword id="KW-1133">Transmembrane helix</keyword>
<feature type="chain" id="PRO_0000083130" description="Biosynthetic peptidoglycan transglycosylase">
    <location>
        <begin position="1"/>
        <end position="233"/>
    </location>
</feature>
<feature type="transmembrane region" description="Helical" evidence="1">
    <location>
        <begin position="8"/>
        <end position="28"/>
    </location>
</feature>
<reference key="1">
    <citation type="journal article" date="1996" name="Mol. Microbiol.">
        <title>Monofunctional biosynthetic peptidoglycan transglycosylases.</title>
        <authorList>
            <person name="Spratt B.G."/>
            <person name="Zhou J."/>
            <person name="Taylor M."/>
            <person name="Merrick M.J."/>
        </authorList>
    </citation>
    <scope>NUCLEOTIDE SEQUENCE [GENOMIC DNA]</scope>
    <source>
        <strain>CH95</strain>
    </source>
</reference>
<reference key="2">
    <citation type="journal article" date="1997" name="Mol. Microbiol.">
        <title>Interspecies recombination, and phylogenetic distortions, within the glutamine synthetase and shikimate dehydrogenase genes of Neisseria meningitidis and commensal Neisseria species.</title>
        <authorList>
            <person name="Zhou J."/>
            <person name="Bowler L.D."/>
            <person name="Spratt B.G."/>
        </authorList>
    </citation>
    <scope>NUCLEOTIDE SEQUENCE [GENOMIC DNA]</scope>
    <source>
        <strain>CH95</strain>
    </source>
</reference>
<sequence>MFRIVKWLIALPVGIFIFFNAYVYGNIITYRAVAPHRTAFMSMRMKQFEQEGRDVALDYRWVPYNRISTNLKKALIASEDVRFAGHGGFDWDGIQNAIRRNRNSGEVKAGGSTISQQLAKNLFLNESRNYLRKGEEAAITAMMEAVTDKNRIFELYLNSIEWHYGVFGAEAASRYFYKKPAADLTKQQAAKLTALVPAPLYYADHPKSKRLRNKTNIVLRRMGSAELPESDTD</sequence>
<evidence type="ECO:0000255" key="1">
    <source>
        <dbReference type="HAMAP-Rule" id="MF_00766"/>
    </source>
</evidence>
<evidence type="ECO:0000303" key="2">
    <source>
    </source>
</evidence>
<comment type="function">
    <text evidence="1">Peptidoglycan polymerase that catalyzes glycan chain elongation from lipid-linked precursors.</text>
</comment>
<comment type="catalytic activity">
    <reaction evidence="1">
        <text>[GlcNAc-(1-&gt;4)-Mur2Ac(oyl-L-Ala-gamma-D-Glu-L-Lys-D-Ala-D-Ala)](n)-di-trans,octa-cis-undecaprenyl diphosphate + beta-D-GlcNAc-(1-&gt;4)-Mur2Ac(oyl-L-Ala-gamma-D-Glu-L-Lys-D-Ala-D-Ala)-di-trans,octa-cis-undecaprenyl diphosphate = [GlcNAc-(1-&gt;4)-Mur2Ac(oyl-L-Ala-gamma-D-Glu-L-Lys-D-Ala-D-Ala)](n+1)-di-trans,octa-cis-undecaprenyl diphosphate + di-trans,octa-cis-undecaprenyl diphosphate + H(+)</text>
        <dbReference type="Rhea" id="RHEA:23708"/>
        <dbReference type="Rhea" id="RHEA-COMP:9602"/>
        <dbReference type="Rhea" id="RHEA-COMP:9603"/>
        <dbReference type="ChEBI" id="CHEBI:15378"/>
        <dbReference type="ChEBI" id="CHEBI:58405"/>
        <dbReference type="ChEBI" id="CHEBI:60033"/>
        <dbReference type="ChEBI" id="CHEBI:78435"/>
        <dbReference type="EC" id="2.4.99.28"/>
    </reaction>
</comment>
<comment type="pathway">
    <text evidence="1">Cell wall biogenesis; peptidoglycan biosynthesis.</text>
</comment>
<comment type="subcellular location">
    <subcellularLocation>
        <location evidence="1">Cell inner membrane</location>
        <topology evidence="1">Single-pass membrane protein</topology>
    </subcellularLocation>
</comment>
<comment type="similarity">
    <text evidence="1">Belongs to the glycosyltransferase 51 family.</text>
</comment>
<protein>
    <recommendedName>
        <fullName evidence="1">Biosynthetic peptidoglycan transglycosylase</fullName>
        <ecNumber evidence="1">2.4.99.28</ecNumber>
    </recommendedName>
    <alternativeName>
        <fullName evidence="1">Glycan polymerase</fullName>
    </alternativeName>
    <alternativeName>
        <fullName evidence="2">Monofunctional biosynthetic peptidoglycan transglycosylase</fullName>
    </alternativeName>
    <alternativeName>
        <fullName evidence="1">Peptidoglycan glycosyltransferase MtgA</fullName>
        <shortName evidence="1">PGT</shortName>
    </alternativeName>
</protein>
<proteinExistence type="inferred from homology"/>
<name>MTGA_NEIGO</name>
<accession>Q51005</accession>
<accession>O08028</accession>